<protein>
    <recommendedName>
        <fullName>Uncharacterized protein HI_0489</fullName>
    </recommendedName>
</protein>
<proteinExistence type="predicted"/>
<reference key="1">
    <citation type="journal article" date="1995" name="Science">
        <title>Whole-genome random sequencing and assembly of Haemophilus influenzae Rd.</title>
        <authorList>
            <person name="Fleischmann R.D."/>
            <person name="Adams M.D."/>
            <person name="White O."/>
            <person name="Clayton R.A."/>
            <person name="Kirkness E.F."/>
            <person name="Kerlavage A.R."/>
            <person name="Bult C.J."/>
            <person name="Tomb J.-F."/>
            <person name="Dougherty B.A."/>
            <person name="Merrick J.M."/>
            <person name="McKenney K."/>
            <person name="Sutton G.G."/>
            <person name="FitzHugh W."/>
            <person name="Fields C.A."/>
            <person name="Gocayne J.D."/>
            <person name="Scott J.D."/>
            <person name="Shirley R."/>
            <person name="Liu L.-I."/>
            <person name="Glodek A."/>
            <person name="Kelley J.M."/>
            <person name="Weidman J.F."/>
            <person name="Phillips C.A."/>
            <person name="Spriggs T."/>
            <person name="Hedblom E."/>
            <person name="Cotton M.D."/>
            <person name="Utterback T.R."/>
            <person name="Hanna M.C."/>
            <person name="Nguyen D.T."/>
            <person name="Saudek D.M."/>
            <person name="Brandon R.C."/>
            <person name="Fine L.D."/>
            <person name="Fritchman J.L."/>
            <person name="Fuhrmann J.L."/>
            <person name="Geoghagen N.S.M."/>
            <person name="Gnehm C.L."/>
            <person name="McDonald L.A."/>
            <person name="Small K.V."/>
            <person name="Fraser C.M."/>
            <person name="Smith H.O."/>
            <person name="Venter J.C."/>
        </authorList>
    </citation>
    <scope>NUCLEOTIDE SEQUENCE [LARGE SCALE GENOMIC DNA]</scope>
    <source>
        <strain>ATCC 51907 / DSM 11121 / KW20 / Rd</strain>
    </source>
</reference>
<dbReference type="EMBL" id="L42023">
    <property type="protein sequence ID" value="AAC22148.1"/>
    <property type="molecule type" value="Genomic_DNA"/>
</dbReference>
<dbReference type="PIR" id="E64008">
    <property type="entry name" value="E64008"/>
</dbReference>
<dbReference type="RefSeq" id="NP_438650.1">
    <property type="nucleotide sequence ID" value="NC_000907.1"/>
</dbReference>
<dbReference type="STRING" id="71421.HI_0489"/>
<dbReference type="EnsemblBacteria" id="AAC22148">
    <property type="protein sequence ID" value="AAC22148"/>
    <property type="gene ID" value="HI_0489"/>
</dbReference>
<dbReference type="KEGG" id="hin:HI_0489"/>
<dbReference type="PATRIC" id="fig|71421.8.peg.509"/>
<dbReference type="eggNOG" id="COG1238">
    <property type="taxonomic scope" value="Bacteria"/>
</dbReference>
<dbReference type="HOGENOM" id="CLU_125997_1_0_6"/>
<dbReference type="OrthoDB" id="9814483at2"/>
<dbReference type="PhylomeDB" id="P44005"/>
<dbReference type="BioCyc" id="HINF71421:G1GJ1-505-MONOMER"/>
<dbReference type="Proteomes" id="UP000000579">
    <property type="component" value="Chromosome"/>
</dbReference>
<dbReference type="GO" id="GO:0005886">
    <property type="term" value="C:plasma membrane"/>
    <property type="evidence" value="ECO:0007669"/>
    <property type="project" value="UniProtKB-SubCell"/>
</dbReference>
<dbReference type="InterPro" id="IPR051311">
    <property type="entry name" value="DedA_domain"/>
</dbReference>
<dbReference type="InterPro" id="IPR032816">
    <property type="entry name" value="VTT_dom"/>
</dbReference>
<dbReference type="PANTHER" id="PTHR42709">
    <property type="entry name" value="ALKALINE PHOSPHATASE LIKE PROTEIN"/>
    <property type="match status" value="1"/>
</dbReference>
<dbReference type="PANTHER" id="PTHR42709:SF4">
    <property type="entry name" value="INNER MEMBRANE PROTEIN YQAA"/>
    <property type="match status" value="1"/>
</dbReference>
<dbReference type="Pfam" id="PF09335">
    <property type="entry name" value="VTT_dom"/>
    <property type="match status" value="1"/>
</dbReference>
<organism>
    <name type="scientific">Haemophilus influenzae (strain ATCC 51907 / DSM 11121 / KW20 / Rd)</name>
    <dbReference type="NCBI Taxonomy" id="71421"/>
    <lineage>
        <taxon>Bacteria</taxon>
        <taxon>Pseudomonadati</taxon>
        <taxon>Pseudomonadota</taxon>
        <taxon>Gammaproteobacteria</taxon>
        <taxon>Pasteurellales</taxon>
        <taxon>Pasteurellaceae</taxon>
        <taxon>Haemophilus</taxon>
    </lineage>
</organism>
<accession>P44005</accession>
<comment type="subcellular location">
    <subcellularLocation>
        <location evidence="2">Cell membrane</location>
        <topology evidence="2">Multi-pass membrane protein</topology>
    </subcellularLocation>
</comment>
<comment type="similarity">
    <text evidence="2">To E.coli YqaA.</text>
</comment>
<feature type="chain" id="PRO_0000169308" description="Uncharacterized protein HI_0489">
    <location>
        <begin position="1"/>
        <end position="157"/>
    </location>
</feature>
<feature type="transmembrane region" description="Helical" evidence="1">
    <location>
        <begin position="3"/>
        <end position="23"/>
    </location>
</feature>
<feature type="transmembrane region" description="Helical" evidence="1">
    <location>
        <begin position="24"/>
        <end position="44"/>
    </location>
</feature>
<feature type="transmembrane region" description="Helical" evidence="1">
    <location>
        <begin position="47"/>
        <end position="67"/>
    </location>
</feature>
<feature type="transmembrane region" description="Helical" evidence="1">
    <location>
        <begin position="105"/>
        <end position="125"/>
    </location>
</feature>
<keyword id="KW-1003">Cell membrane</keyword>
<keyword id="KW-0472">Membrane</keyword>
<keyword id="KW-1185">Reference proteome</keyword>
<keyword id="KW-0812">Transmembrane</keyword>
<keyword id="KW-1133">Transmembrane helix</keyword>
<gene>
    <name type="ordered locus">HI_0489</name>
</gene>
<evidence type="ECO:0000255" key="1"/>
<evidence type="ECO:0000305" key="2"/>
<sequence>MDIFSFFSADFWQANSLCFMFISAFLSATVLPGNSEVIFVALAVPKLMLGSLFNVDILALILIATAGNSLGSLTTYGIGRWMPKFDPKNYRTLWAINQLRRYGAIALLLSWLPVVGDLFCAIAGWLRLNFVTSSLFIFLGKMVRYVALLFLSTPFLL</sequence>
<name>Y489_HAEIN</name>